<protein>
    <recommendedName>
        <fullName evidence="1">Holliday junction branch migration complex subunit RuvA</fullName>
    </recommendedName>
</protein>
<accession>A9WSE5</accession>
<comment type="function">
    <text evidence="1">The RuvA-RuvB-RuvC complex processes Holliday junction (HJ) DNA during genetic recombination and DNA repair, while the RuvA-RuvB complex plays an important role in the rescue of blocked DNA replication forks via replication fork reversal (RFR). RuvA specifically binds to HJ cruciform DNA, conferring on it an open structure. The RuvB hexamer acts as an ATP-dependent pump, pulling dsDNA into and through the RuvAB complex. HJ branch migration allows RuvC to scan DNA until it finds its consensus sequence, where it cleaves and resolves the cruciform DNA.</text>
</comment>
<comment type="subunit">
    <text evidence="1">Homotetramer. Forms an RuvA(8)-RuvB(12)-Holliday junction (HJ) complex. HJ DNA is sandwiched between 2 RuvA tetramers; dsDNA enters through RuvA and exits via RuvB. An RuvB hexamer assembles on each DNA strand where it exits the tetramer. Each RuvB hexamer is contacted by two RuvA subunits (via domain III) on 2 adjacent RuvB subunits; this complex drives branch migration. In the full resolvosome a probable DNA-RuvA(4)-RuvB(12)-RuvC(2) complex forms which resolves the HJ.</text>
</comment>
<comment type="subcellular location">
    <subcellularLocation>
        <location evidence="1">Cytoplasm</location>
    </subcellularLocation>
</comment>
<comment type="domain">
    <text evidence="1">Has three domains with a flexible linker between the domains II and III and assumes an 'L' shape. Domain III is highly mobile and contacts RuvB.</text>
</comment>
<comment type="similarity">
    <text evidence="1">Belongs to the RuvA family.</text>
</comment>
<name>RUVA_RENSM</name>
<sequence>MISFLRGPVAHIGLSAAVIDVGGVGMLVQATPKTLGTLRLGQESTLTTAMIVREDSMTLYGFADPDEREVFEILLTVSGIGPRLGLAVLAVLEPETIRVATSTGDGKTFTKVPGIGPKVAGRIVLELAGKLVPHGTVNGAPASPSAQWKPQVVAAMTSLGWSEKDALASVEKATADSPELISDGNVAEILRTTLRWLGQDGARTSAGRQVTARG</sequence>
<organism>
    <name type="scientific">Renibacterium salmoninarum (strain ATCC 33209 / DSM 20767 / JCM 11484 / NBRC 15589 / NCIMB 2235)</name>
    <dbReference type="NCBI Taxonomy" id="288705"/>
    <lineage>
        <taxon>Bacteria</taxon>
        <taxon>Bacillati</taxon>
        <taxon>Actinomycetota</taxon>
        <taxon>Actinomycetes</taxon>
        <taxon>Micrococcales</taxon>
        <taxon>Micrococcaceae</taxon>
        <taxon>Renibacterium</taxon>
    </lineage>
</organism>
<evidence type="ECO:0000255" key="1">
    <source>
        <dbReference type="HAMAP-Rule" id="MF_00031"/>
    </source>
</evidence>
<keyword id="KW-0963">Cytoplasm</keyword>
<keyword id="KW-0227">DNA damage</keyword>
<keyword id="KW-0233">DNA recombination</keyword>
<keyword id="KW-0234">DNA repair</keyword>
<keyword id="KW-0238">DNA-binding</keyword>
<keyword id="KW-1185">Reference proteome</keyword>
<feature type="chain" id="PRO_1000074431" description="Holliday junction branch migration complex subunit RuvA">
    <location>
        <begin position="1"/>
        <end position="214"/>
    </location>
</feature>
<feature type="region of interest" description="Domain I" evidence="1">
    <location>
        <begin position="1"/>
        <end position="63"/>
    </location>
</feature>
<feature type="region of interest" description="Domain II" evidence="1">
    <location>
        <begin position="64"/>
        <end position="139"/>
    </location>
</feature>
<feature type="region of interest" description="Flexible linker" evidence="1">
    <location>
        <begin position="139"/>
        <end position="143"/>
    </location>
</feature>
<feature type="region of interest" description="Domain III" evidence="1">
    <location>
        <begin position="144"/>
        <end position="214"/>
    </location>
</feature>
<proteinExistence type="inferred from homology"/>
<dbReference type="EMBL" id="CP000910">
    <property type="protein sequence ID" value="ABY23733.1"/>
    <property type="molecule type" value="Genomic_DNA"/>
</dbReference>
<dbReference type="RefSeq" id="WP_012245403.1">
    <property type="nucleotide sequence ID" value="NC_010168.1"/>
</dbReference>
<dbReference type="SMR" id="A9WSE5"/>
<dbReference type="STRING" id="288705.RSal33209_2000"/>
<dbReference type="KEGG" id="rsa:RSal33209_2000"/>
<dbReference type="eggNOG" id="COG0632">
    <property type="taxonomic scope" value="Bacteria"/>
</dbReference>
<dbReference type="HOGENOM" id="CLU_087936_2_1_11"/>
<dbReference type="Proteomes" id="UP000002007">
    <property type="component" value="Chromosome"/>
</dbReference>
<dbReference type="GO" id="GO:0005737">
    <property type="term" value="C:cytoplasm"/>
    <property type="evidence" value="ECO:0007669"/>
    <property type="project" value="UniProtKB-SubCell"/>
</dbReference>
<dbReference type="GO" id="GO:0009379">
    <property type="term" value="C:Holliday junction helicase complex"/>
    <property type="evidence" value="ECO:0007669"/>
    <property type="project" value="InterPro"/>
</dbReference>
<dbReference type="GO" id="GO:0048476">
    <property type="term" value="C:Holliday junction resolvase complex"/>
    <property type="evidence" value="ECO:0007669"/>
    <property type="project" value="UniProtKB-UniRule"/>
</dbReference>
<dbReference type="GO" id="GO:0005524">
    <property type="term" value="F:ATP binding"/>
    <property type="evidence" value="ECO:0007669"/>
    <property type="project" value="InterPro"/>
</dbReference>
<dbReference type="GO" id="GO:0000400">
    <property type="term" value="F:four-way junction DNA binding"/>
    <property type="evidence" value="ECO:0007669"/>
    <property type="project" value="UniProtKB-UniRule"/>
</dbReference>
<dbReference type="GO" id="GO:0009378">
    <property type="term" value="F:four-way junction helicase activity"/>
    <property type="evidence" value="ECO:0007669"/>
    <property type="project" value="InterPro"/>
</dbReference>
<dbReference type="GO" id="GO:0006310">
    <property type="term" value="P:DNA recombination"/>
    <property type="evidence" value="ECO:0007669"/>
    <property type="project" value="UniProtKB-UniRule"/>
</dbReference>
<dbReference type="GO" id="GO:0006281">
    <property type="term" value="P:DNA repair"/>
    <property type="evidence" value="ECO:0007669"/>
    <property type="project" value="UniProtKB-UniRule"/>
</dbReference>
<dbReference type="CDD" id="cd14332">
    <property type="entry name" value="UBA_RuvA_C"/>
    <property type="match status" value="1"/>
</dbReference>
<dbReference type="Gene3D" id="1.10.150.20">
    <property type="entry name" value="5' to 3' exonuclease, C-terminal subdomain"/>
    <property type="match status" value="1"/>
</dbReference>
<dbReference type="Gene3D" id="1.10.8.10">
    <property type="entry name" value="DNA helicase RuvA subunit, C-terminal domain"/>
    <property type="match status" value="1"/>
</dbReference>
<dbReference type="Gene3D" id="2.40.50.140">
    <property type="entry name" value="Nucleic acid-binding proteins"/>
    <property type="match status" value="1"/>
</dbReference>
<dbReference type="HAMAP" id="MF_00031">
    <property type="entry name" value="DNA_HJ_migration_RuvA"/>
    <property type="match status" value="1"/>
</dbReference>
<dbReference type="InterPro" id="IPR013849">
    <property type="entry name" value="DNA_helicase_Holl-junc_RuvA_I"/>
</dbReference>
<dbReference type="InterPro" id="IPR003583">
    <property type="entry name" value="Hlx-hairpin-Hlx_DNA-bd_motif"/>
</dbReference>
<dbReference type="InterPro" id="IPR012340">
    <property type="entry name" value="NA-bd_OB-fold"/>
</dbReference>
<dbReference type="InterPro" id="IPR000085">
    <property type="entry name" value="RuvA"/>
</dbReference>
<dbReference type="InterPro" id="IPR010994">
    <property type="entry name" value="RuvA_2-like"/>
</dbReference>
<dbReference type="InterPro" id="IPR011114">
    <property type="entry name" value="RuvA_C"/>
</dbReference>
<dbReference type="InterPro" id="IPR036267">
    <property type="entry name" value="RuvA_C_sf"/>
</dbReference>
<dbReference type="NCBIfam" id="TIGR00084">
    <property type="entry name" value="ruvA"/>
    <property type="match status" value="1"/>
</dbReference>
<dbReference type="Pfam" id="PF14520">
    <property type="entry name" value="HHH_5"/>
    <property type="match status" value="1"/>
</dbReference>
<dbReference type="Pfam" id="PF01330">
    <property type="entry name" value="RuvA_N"/>
    <property type="match status" value="1"/>
</dbReference>
<dbReference type="SMART" id="SM00278">
    <property type="entry name" value="HhH1"/>
    <property type="match status" value="2"/>
</dbReference>
<dbReference type="SUPFAM" id="SSF46929">
    <property type="entry name" value="DNA helicase RuvA subunit, C-terminal domain"/>
    <property type="match status" value="1"/>
</dbReference>
<dbReference type="SUPFAM" id="SSF50249">
    <property type="entry name" value="Nucleic acid-binding proteins"/>
    <property type="match status" value="1"/>
</dbReference>
<dbReference type="SUPFAM" id="SSF47781">
    <property type="entry name" value="RuvA domain 2-like"/>
    <property type="match status" value="1"/>
</dbReference>
<gene>
    <name evidence="1" type="primary">ruvA</name>
    <name type="ordered locus">RSal33209_2000</name>
</gene>
<reference key="1">
    <citation type="journal article" date="2008" name="J. Bacteriol.">
        <title>Genome sequence of the fish pathogen Renibacterium salmoninarum suggests reductive evolution away from an environmental Arthrobacter ancestor.</title>
        <authorList>
            <person name="Wiens G.D."/>
            <person name="Rockey D.D."/>
            <person name="Wu Z."/>
            <person name="Chang J."/>
            <person name="Levy R."/>
            <person name="Crane S."/>
            <person name="Chen D.S."/>
            <person name="Capri G.R."/>
            <person name="Burnett J.R."/>
            <person name="Sudheesh P.S."/>
            <person name="Schipma M.J."/>
            <person name="Burd H."/>
            <person name="Bhattacharyya A."/>
            <person name="Rhodes L.D."/>
            <person name="Kaul R."/>
            <person name="Strom M.S."/>
        </authorList>
    </citation>
    <scope>NUCLEOTIDE SEQUENCE [LARGE SCALE GENOMIC DNA]</scope>
    <source>
        <strain>ATCC 33209 / DSM 20767 / JCM 11484 / NBRC 15589 / NCIMB 2235</strain>
    </source>
</reference>